<sequence>MSAYLFLLMLVLIGVISNNQSVIIASSVLLIIKAIGFGDQLFPTLASKGISWGVTIITIAVLVPIATGDIGFKELWNSIKGPVGIVAFASGMFVAIAAGQGVQLMRVDPVVTTALLAGTILAVGFMKGIPVGPLVGAGIAALILGGYQVIEKWF</sequence>
<gene>
    <name type="ordered locus">EAT1b_0668</name>
</gene>
<evidence type="ECO:0000255" key="1">
    <source>
        <dbReference type="HAMAP-Rule" id="MF_01874"/>
    </source>
</evidence>
<proteinExistence type="inferred from homology"/>
<accession>C4L477</accession>
<protein>
    <recommendedName>
        <fullName evidence="1">UPF0756 membrane protein EAT1b_0668</fullName>
    </recommendedName>
</protein>
<keyword id="KW-1003">Cell membrane</keyword>
<keyword id="KW-0472">Membrane</keyword>
<keyword id="KW-0812">Transmembrane</keyword>
<keyword id="KW-1133">Transmembrane helix</keyword>
<feature type="chain" id="PRO_0000388876" description="UPF0756 membrane protein EAT1b_0668">
    <location>
        <begin position="1"/>
        <end position="154"/>
    </location>
</feature>
<feature type="transmembrane region" description="Helical" evidence="1">
    <location>
        <begin position="5"/>
        <end position="25"/>
    </location>
</feature>
<feature type="transmembrane region" description="Helical" evidence="1">
    <location>
        <begin position="52"/>
        <end position="72"/>
    </location>
</feature>
<feature type="transmembrane region" description="Helical" evidence="1">
    <location>
        <begin position="82"/>
        <end position="102"/>
    </location>
</feature>
<feature type="transmembrane region" description="Helical" evidence="1">
    <location>
        <begin position="107"/>
        <end position="127"/>
    </location>
</feature>
<feature type="transmembrane region" description="Helical" evidence="1">
    <location>
        <begin position="129"/>
        <end position="149"/>
    </location>
</feature>
<comment type="subcellular location">
    <subcellularLocation>
        <location evidence="1">Cell membrane</location>
        <topology evidence="1">Multi-pass membrane protein</topology>
    </subcellularLocation>
</comment>
<comment type="similarity">
    <text evidence="1">Belongs to the UPF0756 family.</text>
</comment>
<dbReference type="EMBL" id="CP001615">
    <property type="protein sequence ID" value="ACQ69599.1"/>
    <property type="molecule type" value="Genomic_DNA"/>
</dbReference>
<dbReference type="RefSeq" id="WP_012726718.1">
    <property type="nucleotide sequence ID" value="NC_012673.1"/>
</dbReference>
<dbReference type="STRING" id="360911.EAT1b_0668"/>
<dbReference type="KEGG" id="eat:EAT1b_0668"/>
<dbReference type="eggNOG" id="COG2707">
    <property type="taxonomic scope" value="Bacteria"/>
</dbReference>
<dbReference type="HOGENOM" id="CLU_125889_1_0_9"/>
<dbReference type="OrthoDB" id="80306at2"/>
<dbReference type="Proteomes" id="UP000000716">
    <property type="component" value="Chromosome"/>
</dbReference>
<dbReference type="GO" id="GO:0005886">
    <property type="term" value="C:plasma membrane"/>
    <property type="evidence" value="ECO:0007669"/>
    <property type="project" value="UniProtKB-SubCell"/>
</dbReference>
<dbReference type="HAMAP" id="MF_01874">
    <property type="entry name" value="UPF0756"/>
    <property type="match status" value="1"/>
</dbReference>
<dbReference type="InterPro" id="IPR007382">
    <property type="entry name" value="UPF0756_TM"/>
</dbReference>
<dbReference type="PANTHER" id="PTHR38452">
    <property type="entry name" value="UPF0756 MEMBRANE PROTEIN YEAL"/>
    <property type="match status" value="1"/>
</dbReference>
<dbReference type="PANTHER" id="PTHR38452:SF1">
    <property type="entry name" value="UPF0756 MEMBRANE PROTEIN YEAL"/>
    <property type="match status" value="1"/>
</dbReference>
<dbReference type="Pfam" id="PF04284">
    <property type="entry name" value="DUF441"/>
    <property type="match status" value="1"/>
</dbReference>
<organism>
    <name type="scientific">Exiguobacterium sp. (strain ATCC BAA-1283 / AT1b)</name>
    <dbReference type="NCBI Taxonomy" id="360911"/>
    <lineage>
        <taxon>Bacteria</taxon>
        <taxon>Bacillati</taxon>
        <taxon>Bacillota</taxon>
        <taxon>Bacilli</taxon>
        <taxon>Bacillales</taxon>
        <taxon>Bacillales Family XII. Incertae Sedis</taxon>
        <taxon>Exiguobacterium</taxon>
    </lineage>
</organism>
<reference key="1">
    <citation type="journal article" date="2011" name="J. Bacteriol.">
        <title>Complete genome sequence of the Thermophilic Bacterium Exiguobacterium sp. AT1b.</title>
        <authorList>
            <person name="Vishnivetskaya T.A."/>
            <person name="Lucas S."/>
            <person name="Copeland A."/>
            <person name="Lapidus A."/>
            <person name="Glavina del Rio T."/>
            <person name="Dalin E."/>
            <person name="Tice H."/>
            <person name="Bruce D.C."/>
            <person name="Goodwin L.A."/>
            <person name="Pitluck S."/>
            <person name="Saunders E."/>
            <person name="Brettin T."/>
            <person name="Detter C."/>
            <person name="Han C."/>
            <person name="Larimer F."/>
            <person name="Land M.L."/>
            <person name="Hauser L.J."/>
            <person name="Kyrpides N.C."/>
            <person name="Ovchinnikova G."/>
            <person name="Kathariou S."/>
            <person name="Ramaley R.F."/>
            <person name="Rodrigues D.F."/>
            <person name="Hendrix C."/>
            <person name="Richardson P."/>
            <person name="Tiedje J.M."/>
        </authorList>
    </citation>
    <scope>NUCLEOTIDE SEQUENCE [LARGE SCALE GENOMIC DNA]</scope>
    <source>
        <strain>ATCC BAA-1283 / AT1b</strain>
    </source>
</reference>
<name>Y668_EXISA</name>